<reference key="1">
    <citation type="journal article" date="1996" name="Genomics">
        <title>Complete nucleotide sequences of the domestic cat (Felis catus) mitochondrial genome and a transposed mtDNA tandem repeat (Numt) in the nuclear genome.</title>
        <authorList>
            <person name="Lopez J.V."/>
            <person name="Cevario S."/>
            <person name="O'Brien S.J."/>
        </authorList>
    </citation>
    <scope>NUCLEOTIDE SEQUENCE [LARGE SCALE GENOMIC DNA]</scope>
    <source>
        <strain evidence="6">Abyssinian</strain>
        <tissue>Blood</tissue>
    </source>
</reference>
<sequence length="67" mass="7966">MPQLDTSTWSITIMSMIMTLFIVFQLKISKYLYPSNPEPKSMTTLKQRNPWEKKWTKIYSPLSLPQQ</sequence>
<protein>
    <recommendedName>
        <fullName evidence="1">ATP synthase F(0) complex subunit 8</fullName>
    </recommendedName>
    <alternativeName>
        <fullName>A6L</fullName>
    </alternativeName>
    <alternativeName>
        <fullName>F-ATPase subunit 8</fullName>
    </alternativeName>
</protein>
<accession>P48896</accession>
<dbReference type="EMBL" id="U20753">
    <property type="protein sequence ID" value="AAC48573.1"/>
    <property type="molecule type" value="Genomic_DNA"/>
</dbReference>
<dbReference type="PIR" id="T11406">
    <property type="entry name" value="T11406"/>
</dbReference>
<dbReference type="RefSeq" id="NP_008255.1">
    <property type="nucleotide sequence ID" value="NC_001700.1"/>
</dbReference>
<dbReference type="SMR" id="P48896"/>
<dbReference type="FunCoup" id="P48896">
    <property type="interactions" value="9"/>
</dbReference>
<dbReference type="STRING" id="9685.ENSFCAP00000025713"/>
<dbReference type="PaxDb" id="9685-ENSFCAP00000025713"/>
<dbReference type="Ensembl" id="ENSFCAT00000032648.1">
    <property type="protein sequence ID" value="ENSFCAP00000025713.1"/>
    <property type="gene ID" value="ENSFCAG00000032063.1"/>
</dbReference>
<dbReference type="GeneID" id="807940"/>
<dbReference type="KEGG" id="fca:807940"/>
<dbReference type="CTD" id="4509"/>
<dbReference type="VGNC" id="VGNC:80929">
    <property type="gene designation" value="MT-ATP8"/>
</dbReference>
<dbReference type="eggNOG" id="ENOG502T21P">
    <property type="taxonomic scope" value="Eukaryota"/>
</dbReference>
<dbReference type="GeneTree" id="ENSGT00390000008771"/>
<dbReference type="HOGENOM" id="CLU_2811757_0_0_1"/>
<dbReference type="InParanoid" id="P48896"/>
<dbReference type="OMA" id="LDTSTWF"/>
<dbReference type="OrthoDB" id="9835073at2759"/>
<dbReference type="Proteomes" id="UP000011712">
    <property type="component" value="Mitochondrion"/>
</dbReference>
<dbReference type="Bgee" id="ENSFCAG00000032063">
    <property type="expression patterns" value="Expressed in zone of skin and 9 other cell types or tissues"/>
</dbReference>
<dbReference type="GO" id="GO:0031966">
    <property type="term" value="C:mitochondrial membrane"/>
    <property type="evidence" value="ECO:0007669"/>
    <property type="project" value="UniProtKB-SubCell"/>
</dbReference>
<dbReference type="GO" id="GO:0045259">
    <property type="term" value="C:proton-transporting ATP synthase complex"/>
    <property type="evidence" value="ECO:0000250"/>
    <property type="project" value="UniProtKB"/>
</dbReference>
<dbReference type="GO" id="GO:0015078">
    <property type="term" value="F:proton transmembrane transporter activity"/>
    <property type="evidence" value="ECO:0007669"/>
    <property type="project" value="InterPro"/>
</dbReference>
<dbReference type="GO" id="GO:0015986">
    <property type="term" value="P:proton motive force-driven ATP synthesis"/>
    <property type="evidence" value="ECO:0007669"/>
    <property type="project" value="InterPro"/>
</dbReference>
<dbReference type="InterPro" id="IPR039017">
    <property type="entry name" value="ATP8_mammal"/>
</dbReference>
<dbReference type="InterPro" id="IPR001421">
    <property type="entry name" value="ATP8_metazoa"/>
</dbReference>
<dbReference type="PANTHER" id="PTHR13722">
    <property type="entry name" value="ATP SYNTHASE PROTEIN 8"/>
    <property type="match status" value="1"/>
</dbReference>
<dbReference type="PANTHER" id="PTHR13722:SF0">
    <property type="entry name" value="ATP SYNTHASE PROTEIN 8"/>
    <property type="match status" value="1"/>
</dbReference>
<dbReference type="Pfam" id="PF00895">
    <property type="entry name" value="ATP-synt_8"/>
    <property type="match status" value="1"/>
</dbReference>
<evidence type="ECO:0000250" key="1">
    <source>
        <dbReference type="UniProtKB" id="P03928"/>
    </source>
</evidence>
<evidence type="ECO:0000250" key="2">
    <source>
        <dbReference type="UniProtKB" id="P03930"/>
    </source>
</evidence>
<evidence type="ECO:0000250" key="3">
    <source>
        <dbReference type="UniProtKB" id="P19483"/>
    </source>
</evidence>
<evidence type="ECO:0000255" key="4"/>
<evidence type="ECO:0000305" key="5"/>
<evidence type="ECO:0000312" key="6">
    <source>
        <dbReference type="Proteomes" id="UP000011712"/>
    </source>
</evidence>
<geneLocation type="mitochondrion"/>
<proteinExistence type="inferred from homology"/>
<gene>
    <name evidence="1" type="primary">MT-ATP8</name>
    <name type="synonym">ATP8</name>
    <name type="synonym">ATPASE8</name>
    <name type="synonym">MTATP8</name>
</gene>
<keyword id="KW-0007">Acetylation</keyword>
<keyword id="KW-0066">ATP synthesis</keyword>
<keyword id="KW-0138">CF(0)</keyword>
<keyword id="KW-0375">Hydrogen ion transport</keyword>
<keyword id="KW-0406">Ion transport</keyword>
<keyword id="KW-0472">Membrane</keyword>
<keyword id="KW-0496">Mitochondrion</keyword>
<keyword id="KW-1185">Reference proteome</keyword>
<keyword id="KW-0812">Transmembrane</keyword>
<keyword id="KW-1133">Transmembrane helix</keyword>
<keyword id="KW-0813">Transport</keyword>
<feature type="chain" id="PRO_0000195529" description="ATP synthase F(0) complex subunit 8">
    <location>
        <begin position="1"/>
        <end position="67"/>
    </location>
</feature>
<feature type="transmembrane region" description="Helical" evidence="4">
    <location>
        <begin position="8"/>
        <end position="24"/>
    </location>
</feature>
<feature type="modified residue" description="N6-acetyllysine; alternate" evidence="2">
    <location>
        <position position="54"/>
    </location>
</feature>
<feature type="modified residue" description="N6-succinyllysine; alternate" evidence="2">
    <location>
        <position position="54"/>
    </location>
</feature>
<feature type="modified residue" description="N6-acetyllysine" evidence="2">
    <location>
        <position position="57"/>
    </location>
</feature>
<organism>
    <name type="scientific">Felis catus</name>
    <name type="common">Cat</name>
    <name type="synonym">Felis silvestris catus</name>
    <dbReference type="NCBI Taxonomy" id="9685"/>
    <lineage>
        <taxon>Eukaryota</taxon>
        <taxon>Metazoa</taxon>
        <taxon>Chordata</taxon>
        <taxon>Craniata</taxon>
        <taxon>Vertebrata</taxon>
        <taxon>Euteleostomi</taxon>
        <taxon>Mammalia</taxon>
        <taxon>Eutheria</taxon>
        <taxon>Laurasiatheria</taxon>
        <taxon>Carnivora</taxon>
        <taxon>Feliformia</taxon>
        <taxon>Felidae</taxon>
        <taxon>Felinae</taxon>
        <taxon>Felis</taxon>
    </lineage>
</organism>
<comment type="function">
    <text evidence="1 3">Subunit 8, of the mitochondrial membrane ATP synthase complex (F(1)F(0) ATP synthase or Complex V) that produces ATP from ADP in the presence of a proton gradient across the membrane which is generated by electron transport complexes of the respiratory chain. ATP synthase complex consist of a soluble F(1) head domain - the catalytic core - and a membrane F(1) domain - the membrane proton channel. These two domains are linked by a central stalk rotating inside the F(1) region and a stationary peripheral stalk. During catalysis, ATP synthesis in the catalytic domain of F(1) is coupled via a rotary mechanism of the central stalk subunits to proton translocation (By similarity). In vivo, can only synthesize ATP although its ATP hydrolase activity can be activated artificially in vitro (By similarity). Part of the complex F(0) domain (By similarity).</text>
</comment>
<comment type="subunit">
    <text evidence="1">Component of the ATP synthase complex composed at least of ATP5F1A/subunit alpha, ATP5F1B/subunit beta, ATP5MC1/subunit c (homooctomer), MT-ATP6/subunit a, MT-ATP8/subunit 8, ATP5ME/subunit e, ATP5MF/subunit f, ATP5MG/subunit g, ATP5MK/subunit k, ATP5MJ/subunit j, ATP5F1C/subunit gamma, ATP5F1D/subunit delta, ATP5F1E/subunit epsilon, ATP5PF/subunit F6, ATP5PB/subunit b, ATP5PD/subunit d, ATP5PO/subunit OSCP. ATP synthase complex consists of a soluble F(1) head domain (subunits alpha(3) and beta(3)) - the catalytic core - and a membrane F(0) domain - the membrane proton channel (subunits c, a, 8, e, f, g, k and j). These two domains are linked by a central stalk (subunits gamma, delta, and epsilon) rotating inside the F1 region and a stationary peripheral stalk (subunits F6, b, d, and OSCP). Interacts with PRICKLE3.</text>
</comment>
<comment type="subcellular location">
    <subcellularLocation>
        <location>Mitochondrion membrane</location>
        <topology>Single-pass membrane protein</topology>
    </subcellularLocation>
</comment>
<comment type="similarity">
    <text evidence="5">Belongs to the ATPase protein 8 family.</text>
</comment>
<name>ATP8_FELCA</name>